<comment type="function">
    <text evidence="1">Cysteine desulfurases mobilize the sulfur from L-cysteine to yield L-alanine, an essential step in sulfur metabolism for biosynthesis of a variety of sulfur-containing biomolecules. Component of the suf operon, which is activated and required under specific conditions such as oxidative stress and iron limitation. Acts as a potent selenocysteine lyase in vitro, that mobilizes selenium from L-selenocysteine. Selenocysteine lyase activity is however unsure in vivo.</text>
</comment>
<comment type="catalytic activity">
    <reaction evidence="1">
        <text>(sulfur carrier)-H + L-cysteine = (sulfur carrier)-SH + L-alanine</text>
        <dbReference type="Rhea" id="RHEA:43892"/>
        <dbReference type="Rhea" id="RHEA-COMP:14737"/>
        <dbReference type="Rhea" id="RHEA-COMP:14739"/>
        <dbReference type="ChEBI" id="CHEBI:29917"/>
        <dbReference type="ChEBI" id="CHEBI:35235"/>
        <dbReference type="ChEBI" id="CHEBI:57972"/>
        <dbReference type="ChEBI" id="CHEBI:64428"/>
        <dbReference type="EC" id="2.8.1.7"/>
    </reaction>
</comment>
<comment type="catalytic activity">
    <reaction evidence="1">
        <text>L-selenocysteine + AH2 = hydrogenselenide + L-alanine + A + H(+)</text>
        <dbReference type="Rhea" id="RHEA:11632"/>
        <dbReference type="ChEBI" id="CHEBI:13193"/>
        <dbReference type="ChEBI" id="CHEBI:15378"/>
        <dbReference type="ChEBI" id="CHEBI:17499"/>
        <dbReference type="ChEBI" id="CHEBI:29317"/>
        <dbReference type="ChEBI" id="CHEBI:57843"/>
        <dbReference type="ChEBI" id="CHEBI:57972"/>
        <dbReference type="EC" id="4.4.1.16"/>
    </reaction>
</comment>
<comment type="cofactor">
    <cofactor evidence="1">
        <name>pyridoxal 5'-phosphate</name>
        <dbReference type="ChEBI" id="CHEBI:597326"/>
    </cofactor>
</comment>
<comment type="pathway">
    <text evidence="1">Cofactor biosynthesis; iron-sulfur cluster biosynthesis.</text>
</comment>
<comment type="subunit">
    <text evidence="1">Homodimer. Interacts with SufE and the SufBCD complex composed of SufB, SufC and SufD. The interaction with SufE is required to mediate the direct transfer of the sulfur atom from the S-sulfanylcysteine.</text>
</comment>
<comment type="subcellular location">
    <subcellularLocation>
        <location evidence="1">Cytoplasm</location>
    </subcellularLocation>
</comment>
<comment type="similarity">
    <text evidence="1">Belongs to the class-V pyridoxal-phosphate-dependent aminotransferase family. Csd subfamily.</text>
</comment>
<reference key="1">
    <citation type="submission" date="2009-07" db="EMBL/GenBank/DDBJ databases">
        <title>Complete sequence of Pectobacterium carotovorum subsp. carotovorum PC1.</title>
        <authorList>
            <consortium name="US DOE Joint Genome Institute"/>
            <person name="Lucas S."/>
            <person name="Copeland A."/>
            <person name="Lapidus A."/>
            <person name="Glavina del Rio T."/>
            <person name="Tice H."/>
            <person name="Bruce D."/>
            <person name="Goodwin L."/>
            <person name="Pitluck S."/>
            <person name="Munk A.C."/>
            <person name="Brettin T."/>
            <person name="Detter J.C."/>
            <person name="Han C."/>
            <person name="Tapia R."/>
            <person name="Larimer F."/>
            <person name="Land M."/>
            <person name="Hauser L."/>
            <person name="Kyrpides N."/>
            <person name="Mikhailova N."/>
            <person name="Balakrishnan V."/>
            <person name="Glasner J."/>
            <person name="Perna N.T."/>
        </authorList>
    </citation>
    <scope>NUCLEOTIDE SEQUENCE [LARGE SCALE GENOMIC DNA]</scope>
    <source>
        <strain>PC1</strain>
    </source>
</reference>
<proteinExistence type="inferred from homology"/>
<gene>
    <name evidence="1" type="primary">sufS</name>
    <name type="ordered locus">PC1_2446</name>
</gene>
<accession>C6DKM6</accession>
<sequence length="407" mass="44415">MSYPIERVRADFPLLASEVNGQPLAYLDSAASAQKPQSVIEREAEFYRHEYAAVHRGIHTLSAQATSAMEAVREQVAAFINAASVEEIVFVRGTTEAINLVANSYGRTFIQPGDNLIITEMEHHANIVPWQMLAEARGVEVRVLPLAEDGSLDVAQLPGLLDERTRLLAVTQISNVLGALNPVKTMIAQAKAVGAVTLVDGAQSIMHQTVDVQDLDCDFFVFSGHKIYGPSGIGVLYGKRDLLQAMPPWEGGGAMIRQVSLRTGTTYADSPWRFEAGSPNTGGIMGLGAALDYVTALGREEIQRYESSLMKYALEALKQVPDLTLYGPAERHGVIAFNLGQHHAYDVGSFLDRYGIAIRTGHHCAMPLMEHYGVPSMCRASLAVYTTREEIDRLVAGLQRIHRLLGS</sequence>
<feature type="chain" id="PRO_1000216076" description="Cysteine desulfurase">
    <location>
        <begin position="1"/>
        <end position="407"/>
    </location>
</feature>
<feature type="active site" description="Cysteine persulfide intermediate" evidence="1">
    <location>
        <position position="364"/>
    </location>
</feature>
<feature type="modified residue" description="N6-(pyridoxal phosphate)lysine" evidence="1">
    <location>
        <position position="226"/>
    </location>
</feature>
<protein>
    <recommendedName>
        <fullName evidence="1">Cysteine desulfurase</fullName>
        <ecNumber evidence="1">2.8.1.7</ecNumber>
    </recommendedName>
    <alternativeName>
        <fullName evidence="1">Selenocysteine beta-lyase</fullName>
        <shortName evidence="1">SCL</shortName>
    </alternativeName>
    <alternativeName>
        <fullName evidence="1">Selenocysteine lyase</fullName>
        <ecNumber evidence="1">4.4.1.16</ecNumber>
    </alternativeName>
    <alternativeName>
        <fullName evidence="1">Selenocysteine reductase</fullName>
    </alternativeName>
</protein>
<keyword id="KW-0963">Cytoplasm</keyword>
<keyword id="KW-0456">Lyase</keyword>
<keyword id="KW-0663">Pyridoxal phosphate</keyword>
<keyword id="KW-0808">Transferase</keyword>
<organism>
    <name type="scientific">Pectobacterium carotovorum subsp. carotovorum (strain PC1)</name>
    <dbReference type="NCBI Taxonomy" id="561230"/>
    <lineage>
        <taxon>Bacteria</taxon>
        <taxon>Pseudomonadati</taxon>
        <taxon>Pseudomonadota</taxon>
        <taxon>Gammaproteobacteria</taxon>
        <taxon>Enterobacterales</taxon>
        <taxon>Pectobacteriaceae</taxon>
        <taxon>Pectobacterium</taxon>
    </lineage>
</organism>
<dbReference type="EC" id="2.8.1.7" evidence="1"/>
<dbReference type="EC" id="4.4.1.16" evidence="1"/>
<dbReference type="EMBL" id="CP001657">
    <property type="protein sequence ID" value="ACT13477.1"/>
    <property type="molecule type" value="Genomic_DNA"/>
</dbReference>
<dbReference type="RefSeq" id="WP_015840658.1">
    <property type="nucleotide sequence ID" value="NC_012917.1"/>
</dbReference>
<dbReference type="SMR" id="C6DKM6"/>
<dbReference type="STRING" id="561230.PC1_2446"/>
<dbReference type="KEGG" id="pct:PC1_2446"/>
<dbReference type="eggNOG" id="COG0520">
    <property type="taxonomic scope" value="Bacteria"/>
</dbReference>
<dbReference type="HOGENOM" id="CLU_003433_2_5_6"/>
<dbReference type="OrthoDB" id="9808002at2"/>
<dbReference type="UniPathway" id="UPA00266"/>
<dbReference type="Proteomes" id="UP000002736">
    <property type="component" value="Chromosome"/>
</dbReference>
<dbReference type="GO" id="GO:0005737">
    <property type="term" value="C:cytoplasm"/>
    <property type="evidence" value="ECO:0007669"/>
    <property type="project" value="UniProtKB-SubCell"/>
</dbReference>
<dbReference type="GO" id="GO:0031071">
    <property type="term" value="F:cysteine desulfurase activity"/>
    <property type="evidence" value="ECO:0007669"/>
    <property type="project" value="UniProtKB-UniRule"/>
</dbReference>
<dbReference type="GO" id="GO:0030170">
    <property type="term" value="F:pyridoxal phosphate binding"/>
    <property type="evidence" value="ECO:0007669"/>
    <property type="project" value="InterPro"/>
</dbReference>
<dbReference type="GO" id="GO:0009000">
    <property type="term" value="F:selenocysteine lyase activity"/>
    <property type="evidence" value="ECO:0007669"/>
    <property type="project" value="UniProtKB-UniRule"/>
</dbReference>
<dbReference type="GO" id="GO:0006534">
    <property type="term" value="P:cysteine metabolic process"/>
    <property type="evidence" value="ECO:0007669"/>
    <property type="project" value="InterPro"/>
</dbReference>
<dbReference type="CDD" id="cd06453">
    <property type="entry name" value="SufS_like"/>
    <property type="match status" value="1"/>
</dbReference>
<dbReference type="Gene3D" id="3.90.1150.10">
    <property type="entry name" value="Aspartate Aminotransferase, domain 1"/>
    <property type="match status" value="1"/>
</dbReference>
<dbReference type="Gene3D" id="3.40.640.10">
    <property type="entry name" value="Type I PLP-dependent aspartate aminotransferase-like (Major domain)"/>
    <property type="match status" value="1"/>
</dbReference>
<dbReference type="HAMAP" id="MF_01831">
    <property type="entry name" value="SufS_aminotrans_5"/>
    <property type="match status" value="1"/>
</dbReference>
<dbReference type="InterPro" id="IPR000192">
    <property type="entry name" value="Aminotrans_V_dom"/>
</dbReference>
<dbReference type="InterPro" id="IPR020578">
    <property type="entry name" value="Aminotrans_V_PyrdxlP_BS"/>
</dbReference>
<dbReference type="InterPro" id="IPR010970">
    <property type="entry name" value="Cys_dSase_SufS"/>
</dbReference>
<dbReference type="InterPro" id="IPR016454">
    <property type="entry name" value="Cysteine_dSase"/>
</dbReference>
<dbReference type="InterPro" id="IPR015424">
    <property type="entry name" value="PyrdxlP-dep_Trfase"/>
</dbReference>
<dbReference type="InterPro" id="IPR015421">
    <property type="entry name" value="PyrdxlP-dep_Trfase_major"/>
</dbReference>
<dbReference type="InterPro" id="IPR015422">
    <property type="entry name" value="PyrdxlP-dep_Trfase_small"/>
</dbReference>
<dbReference type="NCBIfam" id="NF006791">
    <property type="entry name" value="PRK09295.1"/>
    <property type="match status" value="1"/>
</dbReference>
<dbReference type="NCBIfam" id="TIGR01979">
    <property type="entry name" value="sufS"/>
    <property type="match status" value="1"/>
</dbReference>
<dbReference type="PANTHER" id="PTHR43586">
    <property type="entry name" value="CYSTEINE DESULFURASE"/>
    <property type="match status" value="1"/>
</dbReference>
<dbReference type="PANTHER" id="PTHR43586:SF25">
    <property type="entry name" value="CYSTEINE DESULFURASE"/>
    <property type="match status" value="1"/>
</dbReference>
<dbReference type="Pfam" id="PF00266">
    <property type="entry name" value="Aminotran_5"/>
    <property type="match status" value="1"/>
</dbReference>
<dbReference type="PIRSF" id="PIRSF005572">
    <property type="entry name" value="NifS"/>
    <property type="match status" value="1"/>
</dbReference>
<dbReference type="SUPFAM" id="SSF53383">
    <property type="entry name" value="PLP-dependent transferases"/>
    <property type="match status" value="1"/>
</dbReference>
<dbReference type="PROSITE" id="PS00595">
    <property type="entry name" value="AA_TRANSFER_CLASS_5"/>
    <property type="match status" value="1"/>
</dbReference>
<evidence type="ECO:0000255" key="1">
    <source>
        <dbReference type="HAMAP-Rule" id="MF_01831"/>
    </source>
</evidence>
<name>SUFS_PECCP</name>